<accession>Q8C633</accession>
<accession>Q9D4L4</accession>
<evidence type="ECO:0000250" key="1">
    <source>
        <dbReference type="UniProtKB" id="Q68FX6"/>
    </source>
</evidence>
<evidence type="ECO:0000256" key="2">
    <source>
        <dbReference type="SAM" id="MobiDB-lite"/>
    </source>
</evidence>
<evidence type="ECO:0000269" key="3">
    <source>
    </source>
</evidence>
<evidence type="ECO:0000269" key="4">
    <source>
    </source>
</evidence>
<evidence type="ECO:0000305" key="5"/>
<sequence>MAEDGSPKIYSRPPRDNSKTPTEADIFFGADNTIPKSETTITSEGDHVTSVNDCTPDGDFSTTVNKLTPTKEKLKLEDDIEGCLKLTTLPEKEITTPTETPNSKPKGSITENFIPVKIGNTSSPVGTVSLIDFSSNTAKEDIFLTTIDTGEKEVVPTTEFSGTLEDSAADVEDASGFPDESTETDVPSSATSDAPDDGAVQVTDSFSPEAGVPPSTEKEVTTIPDITNIAEENVTEIKLIVSEDRPKTVTKLSDSEEEKFITVFELTNSAEKAKDNVEDPLNDEESTDGANDWMEKETASEAESHAVLLTAVESRYDFIVTASETDNVMEESHVNTTDLPENETTESVTNVTEELPSVTSIVDTLKDKEDLSTTNSGLFKLLKEEPDDLMM</sequence>
<name>CABS1_MOUSE</name>
<organism>
    <name type="scientific">Mus musculus</name>
    <name type="common">Mouse</name>
    <dbReference type="NCBI Taxonomy" id="10090"/>
    <lineage>
        <taxon>Eukaryota</taxon>
        <taxon>Metazoa</taxon>
        <taxon>Chordata</taxon>
        <taxon>Craniata</taxon>
        <taxon>Vertebrata</taxon>
        <taxon>Euteleostomi</taxon>
        <taxon>Mammalia</taxon>
        <taxon>Eutheria</taxon>
        <taxon>Euarchontoglires</taxon>
        <taxon>Glires</taxon>
        <taxon>Rodentia</taxon>
        <taxon>Myomorpha</taxon>
        <taxon>Muroidea</taxon>
        <taxon>Muridae</taxon>
        <taxon>Murinae</taxon>
        <taxon>Mus</taxon>
        <taxon>Mus</taxon>
    </lineage>
</organism>
<dbReference type="EMBL" id="AK016441">
    <property type="protein sequence ID" value="BAB30237.1"/>
    <property type="molecule type" value="mRNA"/>
</dbReference>
<dbReference type="EMBL" id="AK076636">
    <property type="protein sequence ID" value="BAC36426.1"/>
    <property type="molecule type" value="mRNA"/>
</dbReference>
<dbReference type="EMBL" id="BC049750">
    <property type="protein sequence ID" value="AAH49750.1"/>
    <property type="molecule type" value="mRNA"/>
</dbReference>
<dbReference type="CCDS" id="CCDS39136.1"/>
<dbReference type="RefSeq" id="NP_081907.1">
    <property type="nucleotide sequence ID" value="NM_027631.3"/>
</dbReference>
<dbReference type="FunCoup" id="Q8C633">
    <property type="interactions" value="8"/>
</dbReference>
<dbReference type="STRING" id="10090.ENSMUSP00000008051"/>
<dbReference type="GlyGen" id="Q8C633">
    <property type="glycosylation" value="2 sites, 1 O-linked glycan (2 sites)"/>
</dbReference>
<dbReference type="iPTMnet" id="Q8C633"/>
<dbReference type="PhosphoSitePlus" id="Q8C633"/>
<dbReference type="SwissPalm" id="Q8C633"/>
<dbReference type="REPRODUCTION-2DPAGE" id="Q8C633"/>
<dbReference type="PaxDb" id="10090-ENSMUSP00000008051"/>
<dbReference type="PeptideAtlas" id="Q8C633"/>
<dbReference type="ProteomicsDB" id="281738"/>
<dbReference type="Antibodypedia" id="44320">
    <property type="antibodies" value="56 antibodies from 20 providers"/>
</dbReference>
<dbReference type="DNASU" id="70977"/>
<dbReference type="Ensembl" id="ENSMUST00000008051.5">
    <property type="protein sequence ID" value="ENSMUSP00000008051.4"/>
    <property type="gene ID" value="ENSMUSG00000007907.5"/>
</dbReference>
<dbReference type="GeneID" id="70977"/>
<dbReference type="KEGG" id="mmu:70977"/>
<dbReference type="UCSC" id="uc008xzj.1">
    <property type="organism name" value="mouse"/>
</dbReference>
<dbReference type="AGR" id="MGI:1918227"/>
<dbReference type="CTD" id="85438"/>
<dbReference type="MGI" id="MGI:1918227">
    <property type="gene designation" value="Cabs1"/>
</dbReference>
<dbReference type="VEuPathDB" id="HostDB:ENSMUSG00000007907"/>
<dbReference type="eggNOG" id="ENOG502RWWC">
    <property type="taxonomic scope" value="Eukaryota"/>
</dbReference>
<dbReference type="GeneTree" id="ENSGT00390000015647"/>
<dbReference type="HOGENOM" id="CLU_719537_0_0_1"/>
<dbReference type="InParanoid" id="Q8C633"/>
<dbReference type="OMA" id="DEVNVWM"/>
<dbReference type="OrthoDB" id="9836525at2759"/>
<dbReference type="PhylomeDB" id="Q8C633"/>
<dbReference type="TreeFam" id="TF338174"/>
<dbReference type="BioGRID-ORCS" id="70977">
    <property type="hits" value="2 hits in 77 CRISPR screens"/>
</dbReference>
<dbReference type="PRO" id="PR:Q8C633"/>
<dbReference type="Proteomes" id="UP000000589">
    <property type="component" value="Chromosome 5"/>
</dbReference>
<dbReference type="RNAct" id="Q8C633">
    <property type="molecule type" value="protein"/>
</dbReference>
<dbReference type="Bgee" id="ENSMUSG00000007907">
    <property type="expression patterns" value="Expressed in seminiferous tubule of testis and 9 other cell types or tissues"/>
</dbReference>
<dbReference type="GO" id="GO:0001669">
    <property type="term" value="C:acrosomal vesicle"/>
    <property type="evidence" value="ECO:0000314"/>
    <property type="project" value="UniProtKB"/>
</dbReference>
<dbReference type="GO" id="GO:0005743">
    <property type="term" value="C:mitochondrial inner membrane"/>
    <property type="evidence" value="ECO:0007669"/>
    <property type="project" value="UniProtKB-SubCell"/>
</dbReference>
<dbReference type="GO" id="GO:0031514">
    <property type="term" value="C:motile cilium"/>
    <property type="evidence" value="ECO:0000314"/>
    <property type="project" value="UniProtKB"/>
</dbReference>
<dbReference type="GO" id="GO:0097228">
    <property type="term" value="C:sperm principal piece"/>
    <property type="evidence" value="ECO:0000314"/>
    <property type="project" value="UniProtKB"/>
</dbReference>
<dbReference type="GO" id="GO:0005509">
    <property type="term" value="F:calcium ion binding"/>
    <property type="evidence" value="ECO:0000314"/>
    <property type="project" value="UniProtKB"/>
</dbReference>
<dbReference type="GO" id="GO:0030317">
    <property type="term" value="P:flagellated sperm motility"/>
    <property type="evidence" value="ECO:0000315"/>
    <property type="project" value="UniProtKB"/>
</dbReference>
<dbReference type="GO" id="GO:0007283">
    <property type="term" value="P:spermatogenesis"/>
    <property type="evidence" value="ECO:0007669"/>
    <property type="project" value="Ensembl"/>
</dbReference>
<dbReference type="InterPro" id="IPR026118">
    <property type="entry name" value="Ca-bd_spermatid"/>
</dbReference>
<dbReference type="PANTHER" id="PTHR22810:SF1">
    <property type="entry name" value="CALCIUM-BINDING AND SPERMATID-SPECIFIC PROTEIN 1"/>
    <property type="match status" value="1"/>
</dbReference>
<dbReference type="PANTHER" id="PTHR22810">
    <property type="entry name" value="TESTIS DEVELOPMENT PROTEIN NYD-SP26"/>
    <property type="match status" value="1"/>
</dbReference>
<dbReference type="Pfam" id="PF15367">
    <property type="entry name" value="CABS1"/>
    <property type="match status" value="1"/>
</dbReference>
<reference key="1">
    <citation type="journal article" date="2005" name="Science">
        <title>The transcriptional landscape of the mammalian genome.</title>
        <authorList>
            <person name="Carninci P."/>
            <person name="Kasukawa T."/>
            <person name="Katayama S."/>
            <person name="Gough J."/>
            <person name="Frith M.C."/>
            <person name="Maeda N."/>
            <person name="Oyama R."/>
            <person name="Ravasi T."/>
            <person name="Lenhard B."/>
            <person name="Wells C."/>
            <person name="Kodzius R."/>
            <person name="Shimokawa K."/>
            <person name="Bajic V.B."/>
            <person name="Brenner S.E."/>
            <person name="Batalov S."/>
            <person name="Forrest A.R."/>
            <person name="Zavolan M."/>
            <person name="Davis M.J."/>
            <person name="Wilming L.G."/>
            <person name="Aidinis V."/>
            <person name="Allen J.E."/>
            <person name="Ambesi-Impiombato A."/>
            <person name="Apweiler R."/>
            <person name="Aturaliya R.N."/>
            <person name="Bailey T.L."/>
            <person name="Bansal M."/>
            <person name="Baxter L."/>
            <person name="Beisel K.W."/>
            <person name="Bersano T."/>
            <person name="Bono H."/>
            <person name="Chalk A.M."/>
            <person name="Chiu K.P."/>
            <person name="Choudhary V."/>
            <person name="Christoffels A."/>
            <person name="Clutterbuck D.R."/>
            <person name="Crowe M.L."/>
            <person name="Dalla E."/>
            <person name="Dalrymple B.P."/>
            <person name="de Bono B."/>
            <person name="Della Gatta G."/>
            <person name="di Bernardo D."/>
            <person name="Down T."/>
            <person name="Engstrom P."/>
            <person name="Fagiolini M."/>
            <person name="Faulkner G."/>
            <person name="Fletcher C.F."/>
            <person name="Fukushima T."/>
            <person name="Furuno M."/>
            <person name="Futaki S."/>
            <person name="Gariboldi M."/>
            <person name="Georgii-Hemming P."/>
            <person name="Gingeras T.R."/>
            <person name="Gojobori T."/>
            <person name="Green R.E."/>
            <person name="Gustincich S."/>
            <person name="Harbers M."/>
            <person name="Hayashi Y."/>
            <person name="Hensch T.K."/>
            <person name="Hirokawa N."/>
            <person name="Hill D."/>
            <person name="Huminiecki L."/>
            <person name="Iacono M."/>
            <person name="Ikeo K."/>
            <person name="Iwama A."/>
            <person name="Ishikawa T."/>
            <person name="Jakt M."/>
            <person name="Kanapin A."/>
            <person name="Katoh M."/>
            <person name="Kawasawa Y."/>
            <person name="Kelso J."/>
            <person name="Kitamura H."/>
            <person name="Kitano H."/>
            <person name="Kollias G."/>
            <person name="Krishnan S.P."/>
            <person name="Kruger A."/>
            <person name="Kummerfeld S.K."/>
            <person name="Kurochkin I.V."/>
            <person name="Lareau L.F."/>
            <person name="Lazarevic D."/>
            <person name="Lipovich L."/>
            <person name="Liu J."/>
            <person name="Liuni S."/>
            <person name="McWilliam S."/>
            <person name="Madan Babu M."/>
            <person name="Madera M."/>
            <person name="Marchionni L."/>
            <person name="Matsuda H."/>
            <person name="Matsuzawa S."/>
            <person name="Miki H."/>
            <person name="Mignone F."/>
            <person name="Miyake S."/>
            <person name="Morris K."/>
            <person name="Mottagui-Tabar S."/>
            <person name="Mulder N."/>
            <person name="Nakano N."/>
            <person name="Nakauchi H."/>
            <person name="Ng P."/>
            <person name="Nilsson R."/>
            <person name="Nishiguchi S."/>
            <person name="Nishikawa S."/>
            <person name="Nori F."/>
            <person name="Ohara O."/>
            <person name="Okazaki Y."/>
            <person name="Orlando V."/>
            <person name="Pang K.C."/>
            <person name="Pavan W.J."/>
            <person name="Pavesi G."/>
            <person name="Pesole G."/>
            <person name="Petrovsky N."/>
            <person name="Piazza S."/>
            <person name="Reed J."/>
            <person name="Reid J.F."/>
            <person name="Ring B.Z."/>
            <person name="Ringwald M."/>
            <person name="Rost B."/>
            <person name="Ruan Y."/>
            <person name="Salzberg S.L."/>
            <person name="Sandelin A."/>
            <person name="Schneider C."/>
            <person name="Schoenbach C."/>
            <person name="Sekiguchi K."/>
            <person name="Semple C.A."/>
            <person name="Seno S."/>
            <person name="Sessa L."/>
            <person name="Sheng Y."/>
            <person name="Shibata Y."/>
            <person name="Shimada H."/>
            <person name="Shimada K."/>
            <person name="Silva D."/>
            <person name="Sinclair B."/>
            <person name="Sperling S."/>
            <person name="Stupka E."/>
            <person name="Sugiura K."/>
            <person name="Sultana R."/>
            <person name="Takenaka Y."/>
            <person name="Taki K."/>
            <person name="Tammoja K."/>
            <person name="Tan S.L."/>
            <person name="Tang S."/>
            <person name="Taylor M.S."/>
            <person name="Tegner J."/>
            <person name="Teichmann S.A."/>
            <person name="Ueda H.R."/>
            <person name="van Nimwegen E."/>
            <person name="Verardo R."/>
            <person name="Wei C.L."/>
            <person name="Yagi K."/>
            <person name="Yamanishi H."/>
            <person name="Zabarovsky E."/>
            <person name="Zhu S."/>
            <person name="Zimmer A."/>
            <person name="Hide W."/>
            <person name="Bult C."/>
            <person name="Grimmond S.M."/>
            <person name="Teasdale R.D."/>
            <person name="Liu E.T."/>
            <person name="Brusic V."/>
            <person name="Quackenbush J."/>
            <person name="Wahlestedt C."/>
            <person name="Mattick J.S."/>
            <person name="Hume D.A."/>
            <person name="Kai C."/>
            <person name="Sasaki D."/>
            <person name="Tomaru Y."/>
            <person name="Fukuda S."/>
            <person name="Kanamori-Katayama M."/>
            <person name="Suzuki M."/>
            <person name="Aoki J."/>
            <person name="Arakawa T."/>
            <person name="Iida J."/>
            <person name="Imamura K."/>
            <person name="Itoh M."/>
            <person name="Kato T."/>
            <person name="Kawaji H."/>
            <person name="Kawagashira N."/>
            <person name="Kawashima T."/>
            <person name="Kojima M."/>
            <person name="Kondo S."/>
            <person name="Konno H."/>
            <person name="Nakano K."/>
            <person name="Ninomiya N."/>
            <person name="Nishio T."/>
            <person name="Okada M."/>
            <person name="Plessy C."/>
            <person name="Shibata K."/>
            <person name="Shiraki T."/>
            <person name="Suzuki S."/>
            <person name="Tagami M."/>
            <person name="Waki K."/>
            <person name="Watahiki A."/>
            <person name="Okamura-Oho Y."/>
            <person name="Suzuki H."/>
            <person name="Kawai J."/>
            <person name="Hayashizaki Y."/>
        </authorList>
    </citation>
    <scope>NUCLEOTIDE SEQUENCE [LARGE SCALE MRNA]</scope>
    <source>
        <strain>C57BL/6J</strain>
        <tissue>Testis</tissue>
    </source>
</reference>
<reference key="2">
    <citation type="journal article" date="2004" name="Genome Res.">
        <title>The status, quality, and expansion of the NIH full-length cDNA project: the Mammalian Gene Collection (MGC).</title>
        <authorList>
            <consortium name="The MGC Project Team"/>
        </authorList>
    </citation>
    <scope>NUCLEOTIDE SEQUENCE [LARGE SCALE MRNA]</scope>
    <source>
        <tissue>Testis</tissue>
    </source>
</reference>
<reference key="3">
    <citation type="journal article" date="2009" name="Biol. Reprod.">
        <title>CABS1 is a novel calcium-binding protein specifically expressed in elongate spermatids of mice.</title>
        <authorList>
            <person name="Kawashima A."/>
            <person name="Osman B.A."/>
            <person name="Takashima M."/>
            <person name="Kikuchi A."/>
            <person name="Kohchi S."/>
            <person name="Satoh E."/>
            <person name="Tamba M."/>
            <person name="Matsuda M."/>
            <person name="Okamura N."/>
        </authorList>
    </citation>
    <scope>CALCIUM-BINDING</scope>
    <scope>SUBCELLULAR LOCATION</scope>
    <scope>TISSUE SPECIFICITY</scope>
    <scope>INDUCTION BY BUSULFAN</scope>
</reference>
<reference key="4">
    <citation type="journal article" date="2010" name="Cell">
        <title>A tissue-specific atlas of mouse protein phosphorylation and expression.</title>
        <authorList>
            <person name="Huttlin E.L."/>
            <person name="Jedrychowski M.P."/>
            <person name="Elias J.E."/>
            <person name="Goswami T."/>
            <person name="Rad R."/>
            <person name="Beausoleil S.A."/>
            <person name="Villen J."/>
            <person name="Haas W."/>
            <person name="Sowa M.E."/>
            <person name="Gygi S.P."/>
        </authorList>
    </citation>
    <scope>IDENTIFICATION BY MASS SPECTROMETRY [LARGE SCALE ANALYSIS]</scope>
    <source>
        <tissue>Testis</tissue>
    </source>
</reference>
<reference key="5">
    <citation type="journal article" date="2021" name="Int. J. Mol. Sci.">
        <title>Cabs1 Maintains Structural Integrity of Mouse Sperm Flagella during Epididymal Transit of Sperm.</title>
        <authorList>
            <person name="Zhang X."/>
            <person name="Zhou W."/>
            <person name="Zhang P."/>
            <person name="Gao F."/>
            <person name="Zhao X."/>
            <person name="Shum W.W."/>
            <person name="Zeng X."/>
        </authorList>
    </citation>
    <scope>FUNCTION</scope>
    <scope>SUBCELLULAR LOCATION</scope>
    <scope>DISRUPTION PHENOTYPE</scope>
    <scope>TISSUE SPECIFICITY</scope>
</reference>
<proteinExistence type="evidence at protein level"/>
<comment type="function">
    <text evidence="3 4">Calcium-binding protein (PubMed:19208547). Essential for maintaining the structural integrity of the sperm flagella (PubMed:33440775).</text>
</comment>
<comment type="subcellular location">
    <subcellularLocation>
        <location evidence="1">Cytoplasm</location>
    </subcellularLocation>
    <subcellularLocation>
        <location evidence="1">Mitochondrion inner membrane</location>
    </subcellularLocation>
    <subcellularLocation>
        <location evidence="3 4">Cell projection</location>
        <location evidence="3 4">Cilium</location>
        <location evidence="3 4">Flagellum</location>
    </subcellularLocation>
    <subcellularLocation>
        <location evidence="4">Cytoplasmic vesicle</location>
        <location evidence="4">Secretory vesicle</location>
        <location evidence="4">Acrosome</location>
    </subcellularLocation>
    <text evidence="1 3 4">Mostly cytoplasmic, but associated with the mitochondrial inner membrane during the last steps of spermatid differentiation (By similarity). Localizes to the principal piece of the sperm flagellum (PubMed:19208547, PubMed:33440775).</text>
</comment>
<comment type="tissue specificity">
    <text evidence="3 4">Detected only in testis. Expressed from stages X to VIII of the seminiferous epithelial cycle. Expressed from step 13 to step 16 of spermatid development (at protein level).</text>
</comment>
<comment type="induction">
    <text evidence="3">Down-regulated by Busulfan.</text>
</comment>
<comment type="disruption phenotype">
    <text evidence="4">Males exhibit significantly impaired sperm tail structure and subfertility (PubMed:33440775). Defects in sperm flagellar differentiation leads to an abnormal annulus and disorganization of the midpiece-principal piece junction (PubMed:33440775).</text>
</comment>
<gene>
    <name type="primary">Cabs1</name>
</gene>
<protein>
    <recommendedName>
        <fullName>Calcium-binding and spermatid-specific protein 1</fullName>
    </recommendedName>
</protein>
<feature type="chain" id="PRO_0000339180" description="Calcium-binding and spermatid-specific protein 1">
    <location>
        <begin position="1"/>
        <end position="391"/>
    </location>
</feature>
<feature type="region of interest" description="Disordered" evidence="2">
    <location>
        <begin position="1"/>
        <end position="23"/>
    </location>
</feature>
<feature type="region of interest" description="Disordered" evidence="2">
    <location>
        <begin position="90"/>
        <end position="110"/>
    </location>
</feature>
<feature type="region of interest" description="Disordered" evidence="2">
    <location>
        <begin position="152"/>
        <end position="221"/>
    </location>
</feature>
<feature type="region of interest" description="Disordered" evidence="2">
    <location>
        <begin position="271"/>
        <end position="299"/>
    </location>
</feature>
<feature type="region of interest" description="Disordered" evidence="2">
    <location>
        <begin position="330"/>
        <end position="351"/>
    </location>
</feature>
<feature type="compositionally biased region" description="Low complexity" evidence="2">
    <location>
        <begin position="90"/>
        <end position="101"/>
    </location>
</feature>
<feature type="compositionally biased region" description="Acidic residues" evidence="2">
    <location>
        <begin position="278"/>
        <end position="287"/>
    </location>
</feature>
<feature type="modified residue" description="Phosphoserine" evidence="1">
    <location>
        <position position="253"/>
    </location>
</feature>
<feature type="modified residue" description="Phosphoserine" evidence="1">
    <location>
        <position position="269"/>
    </location>
</feature>
<feature type="modified residue" description="Phosphoserine" evidence="1">
    <location>
        <position position="314"/>
    </location>
</feature>
<feature type="modified residue" description="Phosphoserine" evidence="1">
    <location>
        <position position="347"/>
    </location>
</feature>
<feature type="modified residue" description="Phosphoserine" evidence="1">
    <location>
        <position position="357"/>
    </location>
</feature>
<feature type="modified residue" description="Phosphoserine" evidence="1">
    <location>
        <position position="372"/>
    </location>
</feature>
<feature type="modified residue" description="Phosphoserine" evidence="1">
    <location>
        <position position="376"/>
    </location>
</feature>
<feature type="sequence conflict" description="In Ref. 1; BAB30237." evidence="5" ref="1">
    <original>K</original>
    <variation>Q</variation>
    <location>
        <position position="8"/>
    </location>
</feature>
<feature type="sequence conflict" description="In Ref. 1; BAB30237." evidence="5" ref="1">
    <original>S</original>
    <variation>V</variation>
    <location>
        <position position="108"/>
    </location>
</feature>
<keyword id="KW-0106">Calcium</keyword>
<keyword id="KW-0966">Cell projection</keyword>
<keyword id="KW-0969">Cilium</keyword>
<keyword id="KW-0963">Cytoplasm</keyword>
<keyword id="KW-0968">Cytoplasmic vesicle</keyword>
<keyword id="KW-0282">Flagellum</keyword>
<keyword id="KW-0472">Membrane</keyword>
<keyword id="KW-0496">Mitochondrion</keyword>
<keyword id="KW-0999">Mitochondrion inner membrane</keyword>
<keyword id="KW-0597">Phosphoprotein</keyword>
<keyword id="KW-1185">Reference proteome</keyword>